<comment type="function">
    <text evidence="1">Catalyzes the reversible phosphorylation of UMP to UDP.</text>
</comment>
<comment type="catalytic activity">
    <reaction evidence="1">
        <text>UMP + ATP = UDP + ADP</text>
        <dbReference type="Rhea" id="RHEA:24400"/>
        <dbReference type="ChEBI" id="CHEBI:30616"/>
        <dbReference type="ChEBI" id="CHEBI:57865"/>
        <dbReference type="ChEBI" id="CHEBI:58223"/>
        <dbReference type="ChEBI" id="CHEBI:456216"/>
        <dbReference type="EC" id="2.7.4.22"/>
    </reaction>
</comment>
<comment type="activity regulation">
    <text evidence="1">Allosterically activated by GTP. Inhibited by UTP.</text>
</comment>
<comment type="pathway">
    <text evidence="1">Pyrimidine metabolism; CTP biosynthesis via de novo pathway; UDP from UMP (UMPK route): step 1/1.</text>
</comment>
<comment type="subunit">
    <text evidence="1">Homohexamer.</text>
</comment>
<comment type="subcellular location">
    <subcellularLocation>
        <location evidence="1">Cytoplasm</location>
    </subcellularLocation>
</comment>
<comment type="similarity">
    <text evidence="1">Belongs to the UMP kinase family.</text>
</comment>
<keyword id="KW-0021">Allosteric enzyme</keyword>
<keyword id="KW-0067">ATP-binding</keyword>
<keyword id="KW-0963">Cytoplasm</keyword>
<keyword id="KW-0418">Kinase</keyword>
<keyword id="KW-0547">Nucleotide-binding</keyword>
<keyword id="KW-0665">Pyrimidine biosynthesis</keyword>
<keyword id="KW-1185">Reference proteome</keyword>
<keyword id="KW-0808">Transferase</keyword>
<proteinExistence type="inferred from homology"/>
<sequence length="245" mass="26331">MVKPKYSRVLIKLSGEALAGEKGVGIDIPTVQTIAQEIKEVHDSGIEIALVIGGGNLWRGEPASKAGMDRVQADYTGMLGTVMNALVMADALQHAGVDTRVQTAIAMQQVAEPYIRGRALRHLQKGRIVIFAAGVGSPYFSTDTTSALRAAEIEADAILMAKNGVDGVYNDDPRKNADAIKFNELTHMEVLKRGLKIMDSTASSLSMDNDIDLVVFNLNESGNIKRVIFGEQIGTTVTSRISDSE</sequence>
<feature type="chain" id="PRO_1000054030" description="Uridylate kinase">
    <location>
        <begin position="1"/>
        <end position="245"/>
    </location>
</feature>
<feature type="region of interest" description="Involved in allosteric activation by GTP" evidence="1">
    <location>
        <begin position="20"/>
        <end position="25"/>
    </location>
</feature>
<feature type="binding site" evidence="1">
    <location>
        <begin position="12"/>
        <end position="15"/>
    </location>
    <ligand>
        <name>ATP</name>
        <dbReference type="ChEBI" id="CHEBI:30616"/>
    </ligand>
</feature>
<feature type="binding site" evidence="1">
    <location>
        <position position="54"/>
    </location>
    <ligand>
        <name>UMP</name>
        <dbReference type="ChEBI" id="CHEBI:57865"/>
    </ligand>
</feature>
<feature type="binding site" evidence="1">
    <location>
        <position position="55"/>
    </location>
    <ligand>
        <name>ATP</name>
        <dbReference type="ChEBI" id="CHEBI:30616"/>
    </ligand>
</feature>
<feature type="binding site" evidence="1">
    <location>
        <position position="59"/>
    </location>
    <ligand>
        <name>ATP</name>
        <dbReference type="ChEBI" id="CHEBI:30616"/>
    </ligand>
</feature>
<feature type="binding site" evidence="1">
    <location>
        <position position="74"/>
    </location>
    <ligand>
        <name>UMP</name>
        <dbReference type="ChEBI" id="CHEBI:57865"/>
    </ligand>
</feature>
<feature type="binding site" evidence="1">
    <location>
        <begin position="135"/>
        <end position="142"/>
    </location>
    <ligand>
        <name>UMP</name>
        <dbReference type="ChEBI" id="CHEBI:57865"/>
    </ligand>
</feature>
<feature type="binding site" evidence="1">
    <location>
        <position position="163"/>
    </location>
    <ligand>
        <name>ATP</name>
        <dbReference type="ChEBI" id="CHEBI:30616"/>
    </ligand>
</feature>
<feature type="binding site" evidence="1">
    <location>
        <position position="169"/>
    </location>
    <ligand>
        <name>ATP</name>
        <dbReference type="ChEBI" id="CHEBI:30616"/>
    </ligand>
</feature>
<feature type="binding site" evidence="1">
    <location>
        <position position="172"/>
    </location>
    <ligand>
        <name>ATP</name>
        <dbReference type="ChEBI" id="CHEBI:30616"/>
    </ligand>
</feature>
<name>PYRH_STRMU</name>
<reference key="1">
    <citation type="journal article" date="2002" name="Proc. Natl. Acad. Sci. U.S.A.">
        <title>Genome sequence of Streptococcus mutans UA159, a cariogenic dental pathogen.</title>
        <authorList>
            <person name="Ajdic D.J."/>
            <person name="McShan W.M."/>
            <person name="McLaughlin R.E."/>
            <person name="Savic G."/>
            <person name="Chang J."/>
            <person name="Carson M.B."/>
            <person name="Primeaux C."/>
            <person name="Tian R."/>
            <person name="Kenton S."/>
            <person name="Jia H.G."/>
            <person name="Lin S.P."/>
            <person name="Qian Y."/>
            <person name="Li S."/>
            <person name="Zhu H."/>
            <person name="Najar F.Z."/>
            <person name="Lai H."/>
            <person name="White J."/>
            <person name="Roe B.A."/>
            <person name="Ferretti J.J."/>
        </authorList>
    </citation>
    <scope>NUCLEOTIDE SEQUENCE [LARGE SCALE GENOMIC DNA]</scope>
    <source>
        <strain>ATCC 700610 / UA159</strain>
    </source>
</reference>
<protein>
    <recommendedName>
        <fullName evidence="1">Uridylate kinase</fullName>
        <shortName evidence="1">UK</shortName>
        <ecNumber evidence="1">2.7.4.22</ecNumber>
    </recommendedName>
    <alternativeName>
        <fullName evidence="1">Uridine monophosphate kinase</fullName>
        <shortName evidence="1">UMP kinase</shortName>
        <shortName evidence="1">UMPK</shortName>
    </alternativeName>
</protein>
<dbReference type="EC" id="2.7.4.22" evidence="1"/>
<dbReference type="EMBL" id="AE014133">
    <property type="protein sequence ID" value="AAN59266.1"/>
    <property type="molecule type" value="Genomic_DNA"/>
</dbReference>
<dbReference type="RefSeq" id="NP_721960.1">
    <property type="nucleotide sequence ID" value="NC_004350.2"/>
</dbReference>
<dbReference type="RefSeq" id="WP_002263605.1">
    <property type="nucleotide sequence ID" value="NC_004350.2"/>
</dbReference>
<dbReference type="SMR" id="Q8DSY1"/>
<dbReference type="STRING" id="210007.SMU_1625"/>
<dbReference type="DNASU" id="1028858"/>
<dbReference type="KEGG" id="smu:SMU_1625"/>
<dbReference type="PATRIC" id="fig|210007.7.peg.1448"/>
<dbReference type="eggNOG" id="COG0528">
    <property type="taxonomic scope" value="Bacteria"/>
</dbReference>
<dbReference type="HOGENOM" id="CLU_033861_0_0_9"/>
<dbReference type="OrthoDB" id="9807458at2"/>
<dbReference type="PhylomeDB" id="Q8DSY1"/>
<dbReference type="UniPathway" id="UPA00159">
    <property type="reaction ID" value="UER00275"/>
</dbReference>
<dbReference type="Proteomes" id="UP000002512">
    <property type="component" value="Chromosome"/>
</dbReference>
<dbReference type="GO" id="GO:0005737">
    <property type="term" value="C:cytoplasm"/>
    <property type="evidence" value="ECO:0007669"/>
    <property type="project" value="UniProtKB-SubCell"/>
</dbReference>
<dbReference type="GO" id="GO:0005524">
    <property type="term" value="F:ATP binding"/>
    <property type="evidence" value="ECO:0007669"/>
    <property type="project" value="UniProtKB-KW"/>
</dbReference>
<dbReference type="GO" id="GO:0033862">
    <property type="term" value="F:UMP kinase activity"/>
    <property type="evidence" value="ECO:0007669"/>
    <property type="project" value="UniProtKB-EC"/>
</dbReference>
<dbReference type="GO" id="GO:0044210">
    <property type="term" value="P:'de novo' CTP biosynthetic process"/>
    <property type="evidence" value="ECO:0007669"/>
    <property type="project" value="UniProtKB-UniRule"/>
</dbReference>
<dbReference type="GO" id="GO:0006225">
    <property type="term" value="P:UDP biosynthetic process"/>
    <property type="evidence" value="ECO:0007669"/>
    <property type="project" value="TreeGrafter"/>
</dbReference>
<dbReference type="CDD" id="cd04254">
    <property type="entry name" value="AAK_UMPK-PyrH-Ec"/>
    <property type="match status" value="1"/>
</dbReference>
<dbReference type="FunFam" id="3.40.1160.10:FF:000019">
    <property type="entry name" value="Uridylate kinase"/>
    <property type="match status" value="1"/>
</dbReference>
<dbReference type="Gene3D" id="3.40.1160.10">
    <property type="entry name" value="Acetylglutamate kinase-like"/>
    <property type="match status" value="1"/>
</dbReference>
<dbReference type="HAMAP" id="MF_01220_B">
    <property type="entry name" value="PyrH_B"/>
    <property type="match status" value="1"/>
</dbReference>
<dbReference type="InterPro" id="IPR036393">
    <property type="entry name" value="AceGlu_kinase-like_sf"/>
</dbReference>
<dbReference type="InterPro" id="IPR001048">
    <property type="entry name" value="Asp/Glu/Uridylate_kinase"/>
</dbReference>
<dbReference type="InterPro" id="IPR011817">
    <property type="entry name" value="Uridylate_kinase"/>
</dbReference>
<dbReference type="InterPro" id="IPR015963">
    <property type="entry name" value="Uridylate_kinase_bac"/>
</dbReference>
<dbReference type="NCBIfam" id="TIGR02075">
    <property type="entry name" value="pyrH_bact"/>
    <property type="match status" value="1"/>
</dbReference>
<dbReference type="PANTHER" id="PTHR42833">
    <property type="entry name" value="URIDYLATE KINASE"/>
    <property type="match status" value="1"/>
</dbReference>
<dbReference type="PANTHER" id="PTHR42833:SF4">
    <property type="entry name" value="URIDYLATE KINASE PUMPKIN, CHLOROPLASTIC"/>
    <property type="match status" value="1"/>
</dbReference>
<dbReference type="Pfam" id="PF00696">
    <property type="entry name" value="AA_kinase"/>
    <property type="match status" value="1"/>
</dbReference>
<dbReference type="PIRSF" id="PIRSF005650">
    <property type="entry name" value="Uridylate_kin"/>
    <property type="match status" value="1"/>
</dbReference>
<dbReference type="SUPFAM" id="SSF53633">
    <property type="entry name" value="Carbamate kinase-like"/>
    <property type="match status" value="1"/>
</dbReference>
<organism>
    <name type="scientific">Streptococcus mutans serotype c (strain ATCC 700610 / UA159)</name>
    <dbReference type="NCBI Taxonomy" id="210007"/>
    <lineage>
        <taxon>Bacteria</taxon>
        <taxon>Bacillati</taxon>
        <taxon>Bacillota</taxon>
        <taxon>Bacilli</taxon>
        <taxon>Lactobacillales</taxon>
        <taxon>Streptococcaceae</taxon>
        <taxon>Streptococcus</taxon>
    </lineage>
</organism>
<gene>
    <name evidence="1" type="primary">pyrH</name>
    <name type="ordered locus">SMU_1625</name>
</gene>
<accession>Q8DSY1</accession>
<evidence type="ECO:0000255" key="1">
    <source>
        <dbReference type="HAMAP-Rule" id="MF_01220"/>
    </source>
</evidence>